<name>IGHG1_MOUSE</name>
<gene>
    <name type="primary">Ighg1</name>
    <name type="synonym">Igh-4</name>
</gene>
<protein>
    <recommendedName>
        <fullName>Ig gamma-1 chain C region secreted form</fullName>
    </recommendedName>
</protein>
<organism>
    <name type="scientific">Mus musculus</name>
    <name type="common">Mouse</name>
    <dbReference type="NCBI Taxonomy" id="10090"/>
    <lineage>
        <taxon>Eukaryota</taxon>
        <taxon>Metazoa</taxon>
        <taxon>Chordata</taxon>
        <taxon>Craniata</taxon>
        <taxon>Vertebrata</taxon>
        <taxon>Euteleostomi</taxon>
        <taxon>Mammalia</taxon>
        <taxon>Eutheria</taxon>
        <taxon>Euarchontoglires</taxon>
        <taxon>Glires</taxon>
        <taxon>Rodentia</taxon>
        <taxon>Myomorpha</taxon>
        <taxon>Muroidea</taxon>
        <taxon>Muridae</taxon>
        <taxon>Murinae</taxon>
        <taxon>Mus</taxon>
        <taxon>Mus</taxon>
    </lineage>
</organism>
<feature type="chain" id="PRO_0000153582" description="Ig gamma-1 chain C region secreted form">
    <location>
        <begin position="1" status="less than"/>
        <end position="324"/>
    </location>
</feature>
<feature type="region of interest" description="CH1">
    <location>
        <begin position="1"/>
        <end position="97"/>
    </location>
</feature>
<feature type="region of interest" description="Hinge">
    <location>
        <begin position="98"/>
        <end position="110"/>
    </location>
</feature>
<feature type="region of interest" description="CH2">
    <location>
        <begin position="111"/>
        <end position="217"/>
    </location>
</feature>
<feature type="region of interest" description="CH3">
    <location>
        <begin position="218"/>
        <end position="324"/>
    </location>
</feature>
<feature type="glycosylation site" id="CAR_000055" description="N-linked (GlcNAc...) asparagine">
    <location>
        <position position="174"/>
    </location>
</feature>
<feature type="disulfide bond" evidence="1 2">
    <location>
        <begin position="27"/>
        <end position="82"/>
    </location>
</feature>
<feature type="disulfide bond" description="Interchain (with a light chain)" evidence="1 2">
    <location>
        <position position="102"/>
    </location>
</feature>
<feature type="disulfide bond" description="Interchain (with a heavy chain)" evidence="1 2">
    <location>
        <position position="104"/>
    </location>
</feature>
<feature type="disulfide bond" description="Interchain (with a heavy chain)" evidence="1 2">
    <location>
        <position position="107"/>
    </location>
</feature>
<feature type="disulfide bond" description="Interchain (with a heavy chain)" evidence="1 2">
    <location>
        <position position="109"/>
    </location>
</feature>
<feature type="disulfide bond" evidence="1 2">
    <location>
        <begin position="138"/>
        <end position="198"/>
    </location>
</feature>
<feature type="disulfide bond" evidence="1 2">
    <location>
        <begin position="244"/>
        <end position="302"/>
    </location>
</feature>
<feature type="sequence conflict" description="In Ref. 4; AA sequence." evidence="3" ref="4">
    <original>N</original>
    <variation>D</variation>
    <location>
        <position position="276"/>
    </location>
</feature>
<feature type="sequence conflict" description="In Ref. 4; AA sequence." evidence="3" ref="4">
    <original>N</original>
    <variation>D</variation>
    <location>
        <position position="278"/>
    </location>
</feature>
<feature type="non-terminal residue">
    <location>
        <position position="1"/>
    </location>
</feature>
<feature type="strand" evidence="6">
    <location>
        <begin position="7"/>
        <end position="11"/>
    </location>
</feature>
<feature type="strand" evidence="5">
    <location>
        <begin position="14"/>
        <end position="17"/>
    </location>
</feature>
<feature type="strand" evidence="4">
    <location>
        <begin position="19"/>
        <end position="21"/>
    </location>
</feature>
<feature type="strand" evidence="6">
    <location>
        <begin position="22"/>
        <end position="35"/>
    </location>
</feature>
<feature type="strand" evidence="6">
    <location>
        <begin position="38"/>
        <end position="41"/>
    </location>
</feature>
<feature type="helix" evidence="6">
    <location>
        <begin position="42"/>
        <end position="44"/>
    </location>
</feature>
<feature type="strand" evidence="6">
    <location>
        <begin position="50"/>
        <end position="52"/>
    </location>
</feature>
<feature type="strand" evidence="6">
    <location>
        <begin position="56"/>
        <end position="58"/>
    </location>
</feature>
<feature type="strand" evidence="6">
    <location>
        <begin position="61"/>
        <end position="71"/>
    </location>
</feature>
<feature type="turn" evidence="6">
    <location>
        <begin position="72"/>
        <end position="77"/>
    </location>
</feature>
<feature type="strand" evidence="6">
    <location>
        <begin position="81"/>
        <end position="86"/>
    </location>
</feature>
<feature type="helix" evidence="6">
    <location>
        <begin position="87"/>
        <end position="89"/>
    </location>
</feature>
<feature type="strand" evidence="6">
    <location>
        <begin position="91"/>
        <end position="96"/>
    </location>
</feature>
<sequence>AKTTPPSVYPLAPGSAAQTNSMVTLGCLVKGYFPEPVTVTWNSGSLSSGVHTFPAVLQSDLYTLSSSVTVPSSPRPSETVTCNVAHPASSTKVDKKIVPRDCGCKPCICTVPEVSSVFIFPPKPKDVLTITLTPKVTCVVVDISKDDPEVQFSWFVDDVEVHTAQTQPREEQFNSTFRSVSELPIMHQDWLNGKEFKCRVNSAAFPAPIEKTISKTKGRPKAPQVYTIPPPKEQMAKDKVSLTCMITDFFPEDITVEWQWNGQPAENYKNTQPIMNTNGSYFVYSKLNVQKSNWEAGNTFTCSVLHEGLHNHHTEKSLSHSPGK</sequence>
<evidence type="ECO:0000255" key="1">
    <source>
        <dbReference type="PROSITE-ProRule" id="PRU00114"/>
    </source>
</evidence>
<evidence type="ECO:0000269" key="2">
    <source>
    </source>
</evidence>
<evidence type="ECO:0000305" key="3"/>
<evidence type="ECO:0007829" key="4">
    <source>
        <dbReference type="PDB" id="1CLO"/>
    </source>
</evidence>
<evidence type="ECO:0007829" key="5">
    <source>
        <dbReference type="PDB" id="1MLC"/>
    </source>
</evidence>
<evidence type="ECO:0007829" key="6">
    <source>
        <dbReference type="PDB" id="1P7K"/>
    </source>
</evidence>
<comment type="subcellular location">
    <molecule>Isoform Secreted</molecule>
    <subcellularLocation>
        <location>Secreted</location>
    </subcellularLocation>
</comment>
<comment type="alternative products">
    <event type="alternative splicing"/>
    <isoform>
        <id>P01868-1</id>
        <name>Secreted</name>
        <sequence type="displayed"/>
    </isoform>
    <isoform>
        <id>P01869-1</id>
        <name>Membrane-bound</name>
        <sequence type="external"/>
    </isoform>
</comment>
<comment type="miscellaneous">
    <molecule>Isoform Secreted</molecule>
    <text>May be the major isoform.</text>
</comment>
<accession>P01868</accession>
<reference key="1">
    <citation type="journal article" date="1979" name="Cell">
        <title>Cloning and complete nucleotide sequence of mouse immunoglobulin gamma 1 chain gene.</title>
        <authorList>
            <person name="Honjo T."/>
            <person name="Obata M."/>
            <person name="Yamawaki-Kataoka Y."/>
            <person name="Kataoka T."/>
            <person name="Kawakami T."/>
            <person name="Takahashi N."/>
            <person name="Mano Y."/>
        </authorList>
    </citation>
    <scope>NUCLEOTIDE SEQUENCE [GENOMIC DNA]</scope>
</reference>
<reference key="2">
    <citation type="journal article" date="1980" name="Gene">
        <title>Immunoglobulin gamma 1 heavy chain gene: structural gene sequences cloned in a bacterial plasmid.</title>
        <authorList>
            <person name="Obata M."/>
            <person name="Yamawaki-Kataoka Y."/>
            <person name="Takahashi N."/>
            <person name="Kataoka T."/>
            <person name="Shimizu A."/>
            <person name="Mano Y."/>
            <person name="Seidman J.G."/>
            <person name="Peterlin B.M."/>
            <person name="Leder P."/>
            <person name="Honjo T."/>
        </authorList>
    </citation>
    <scope>NUCLEOTIDE SEQUENCE [GENOMIC DNA] OF 76-324 (MYELOMA PROTEIN MOPC 31C)</scope>
</reference>
<reference key="3">
    <citation type="journal article" date="1979" name="Nucleic Acids Res.">
        <title>Sequence analysis of cloned cDNA encoding part of an immunoglobulin heavy chain.</title>
        <authorList>
            <person name="Rogers J."/>
            <person name="Clarke P."/>
            <person name="Salser W."/>
        </authorList>
    </citation>
    <scope>NUCLEOTIDE SEQUENCE [GENOMIC DNA / MRNA] OF 70-322 (MYELOMA PROTEIN MOPC 21)</scope>
</reference>
<reference key="4">
    <citation type="journal article" date="1978" name="J. Biol. Chem.">
        <title>Evolution of immunoglobulin subclasses. Primary structure of a murine myeloma gamma1 chain.</title>
        <authorList>
            <person name="Adetugbo K."/>
        </authorList>
    </citation>
    <scope>PROTEIN SEQUENCE (MYELOMA PROTEIN MOPC 21)</scope>
</reference>
<reference key="5">
    <citation type="journal article" date="1972" name="Biochem. J.">
        <title>The disulphide bridges of a mouse immunoglobulin G1 protein.</title>
        <authorList>
            <person name="Svasti J."/>
            <person name="Milstein C."/>
        </authorList>
    </citation>
    <scope>DISULFIDE BONDS (MOPC 21)</scope>
</reference>
<reference key="6">
    <citation type="journal article" date="2010" name="Cell">
        <title>A tissue-specific atlas of mouse protein phosphorylation and expression.</title>
        <authorList>
            <person name="Huttlin E.L."/>
            <person name="Jedrychowski M.P."/>
            <person name="Elias J.E."/>
            <person name="Goswami T."/>
            <person name="Rad R."/>
            <person name="Beausoleil S.A."/>
            <person name="Villen J."/>
            <person name="Haas W."/>
            <person name="Sowa M.E."/>
            <person name="Gygi S.P."/>
        </authorList>
    </citation>
    <scope>IDENTIFICATION BY MASS SPECTROMETRY [LARGE SCALE ANALYSIS]</scope>
    <source>
        <tissue>Brown adipose tissue</tissue>
        <tissue>Heart</tissue>
        <tissue>Kidney</tissue>
        <tissue>Liver</tissue>
        <tissue>Lung</tissue>
        <tissue>Spleen</tissue>
        <tissue>Testis</tissue>
    </source>
</reference>
<dbReference type="EMBL" id="J00453">
    <property type="protein sequence ID" value="AAB59656.1"/>
    <property type="molecule type" value="Genomic_DNA"/>
</dbReference>
<dbReference type="EMBL" id="V00795">
    <property type="protein sequence ID" value="CAA24176.1"/>
    <property type="molecule type" value="mRNA"/>
</dbReference>
<dbReference type="PIR" id="A02159">
    <property type="entry name" value="G1MS"/>
</dbReference>
<dbReference type="PDB" id="1AHW">
    <property type="method" value="X-ray"/>
    <property type="resolution" value="3.00 A"/>
    <property type="chains" value="B/E=-"/>
</dbReference>
<dbReference type="PDB" id="1AI1">
    <property type="method" value="X-ray"/>
    <property type="resolution" value="2.80 A"/>
    <property type="chains" value="H=1-100"/>
</dbReference>
<dbReference type="PDB" id="1BM3">
    <property type="method" value="X-ray"/>
    <property type="resolution" value="2.00 A"/>
    <property type="chains" value="H=1-102"/>
</dbReference>
<dbReference type="PDB" id="1CLO">
    <property type="method" value="X-ray"/>
    <property type="resolution" value="2.10 A"/>
    <property type="chains" value="H=1-101"/>
</dbReference>
<dbReference type="PDB" id="1CT8">
    <property type="method" value="X-ray"/>
    <property type="resolution" value="2.20 A"/>
    <property type="chains" value="B/D=1-102"/>
</dbReference>
<dbReference type="PDB" id="1DBA">
    <property type="method" value="X-ray"/>
    <property type="resolution" value="2.80 A"/>
    <property type="chains" value="H=1-100"/>
</dbReference>
<dbReference type="PDB" id="1DBB">
    <property type="method" value="X-ray"/>
    <property type="resolution" value="2.70 A"/>
    <property type="chains" value="H=1-100"/>
</dbReference>
<dbReference type="PDB" id="1DBJ">
    <property type="method" value="X-ray"/>
    <property type="resolution" value="2.70 A"/>
    <property type="chains" value="H=1-100"/>
</dbReference>
<dbReference type="PDB" id="1DBK">
    <property type="method" value="X-ray"/>
    <property type="resolution" value="3.00 A"/>
    <property type="chains" value="H=1-100"/>
</dbReference>
<dbReference type="PDB" id="1DBM">
    <property type="method" value="X-ray"/>
    <property type="resolution" value="2.70 A"/>
    <property type="chains" value="H=1-100"/>
</dbReference>
<dbReference type="PDB" id="1EMT">
    <property type="method" value="X-ray"/>
    <property type="resolution" value="2.25 A"/>
    <property type="chains" value="H=1-100"/>
</dbReference>
<dbReference type="PDB" id="1FBI">
    <property type="method" value="X-ray"/>
    <property type="resolution" value="3.00 A"/>
    <property type="chains" value="H/Q=1-99"/>
</dbReference>
<dbReference type="PDB" id="1FDL">
    <property type="method" value="X-ray"/>
    <property type="resolution" value="2.50 A"/>
    <property type="chains" value="H=1-102"/>
</dbReference>
<dbReference type="PDB" id="1FNS">
    <property type="method" value="X-ray"/>
    <property type="resolution" value="2.00 A"/>
    <property type="chains" value="H=1-103"/>
</dbReference>
<dbReference type="PDB" id="1GPO">
    <property type="method" value="X-ray"/>
    <property type="resolution" value="1.95 A"/>
    <property type="chains" value="H/I=1-102"/>
</dbReference>
<dbReference type="PDB" id="1K4D">
    <property type="method" value="X-ray"/>
    <property type="resolution" value="2.30 A"/>
    <property type="chains" value="A=1-101"/>
</dbReference>
<dbReference type="PDB" id="1KEL">
    <property type="method" value="X-ray"/>
    <property type="resolution" value="1.90 A"/>
    <property type="chains" value="H=1-99"/>
</dbReference>
<dbReference type="PDB" id="1KEM">
    <property type="method" value="X-ray"/>
    <property type="resolution" value="2.20 A"/>
    <property type="chains" value="H=1-99"/>
</dbReference>
<dbReference type="PDB" id="1MF2">
    <property type="method" value="X-ray"/>
    <property type="resolution" value="2.60 A"/>
    <property type="chains" value="H/N=1-101"/>
</dbReference>
<dbReference type="PDB" id="1MLC">
    <property type="method" value="X-ray"/>
    <property type="resolution" value="2.50 A"/>
    <property type="chains" value="B/D=1-102"/>
</dbReference>
<dbReference type="PDB" id="1N5Y">
    <property type="method" value="X-ray"/>
    <property type="resolution" value="3.10 A"/>
    <property type="chains" value="H=1-102"/>
</dbReference>
<dbReference type="PDB" id="1N6Q">
    <property type="method" value="X-ray"/>
    <property type="resolution" value="3.00 A"/>
    <property type="chains" value="H=1-102"/>
</dbReference>
<dbReference type="PDB" id="1NTL">
    <property type="method" value="X-ray"/>
    <property type="resolution" value="30.00 A"/>
    <property type="chains" value="A/B=98-324"/>
</dbReference>
<dbReference type="PDB" id="1OAK">
    <property type="method" value="X-ray"/>
    <property type="resolution" value="2.20 A"/>
    <property type="chains" value="H=1-101"/>
</dbReference>
<dbReference type="PDB" id="1OPG">
    <property type="method" value="X-ray"/>
    <property type="resolution" value="2.00 A"/>
    <property type="chains" value="H=1-102"/>
</dbReference>
<dbReference type="PDB" id="1P2C">
    <property type="method" value="X-ray"/>
    <property type="resolution" value="2.00 A"/>
    <property type="chains" value="B/E=1-102"/>
</dbReference>
<dbReference type="PDB" id="1P7K">
    <property type="method" value="X-ray"/>
    <property type="resolution" value="1.75 A"/>
    <property type="chains" value="B/H=1-102"/>
</dbReference>
<dbReference type="PDB" id="1R0A">
    <property type="method" value="X-ray"/>
    <property type="resolution" value="2.80 A"/>
    <property type="chains" value="H=1-102"/>
</dbReference>
<dbReference type="PDB" id="1R3I">
    <property type="method" value="X-ray"/>
    <property type="resolution" value="2.40 A"/>
    <property type="chains" value="H=1-101"/>
</dbReference>
<dbReference type="PDB" id="1R3J">
    <property type="method" value="X-ray"/>
    <property type="resolution" value="1.90 A"/>
    <property type="chains" value="B=1-101"/>
</dbReference>
<dbReference type="PDB" id="1R3K">
    <property type="method" value="X-ray"/>
    <property type="resolution" value="2.80 A"/>
    <property type="chains" value="B=1-101"/>
</dbReference>
<dbReference type="PDB" id="1R3L">
    <property type="method" value="X-ray"/>
    <property type="resolution" value="2.41 A"/>
    <property type="chains" value="B=1-101"/>
</dbReference>
<dbReference type="PDB" id="1RIH">
    <property type="method" value="X-ray"/>
    <property type="resolution" value="2.50 A"/>
    <property type="chains" value="H=1-106"/>
</dbReference>
<dbReference type="PDB" id="1SEQ">
    <property type="method" value="X-ray"/>
    <property type="resolution" value="1.78 A"/>
    <property type="chains" value="H=3-102"/>
</dbReference>
<dbReference type="PDB" id="1YED">
    <property type="method" value="X-ray"/>
    <property type="resolution" value="3.10 A"/>
    <property type="chains" value="B/H=1-102"/>
</dbReference>
<dbReference type="PDB" id="2ATY">
    <property type="method" value="X-ray"/>
    <property type="chains" value="A/B=98-324"/>
</dbReference>
<dbReference type="PDB" id="2B2X">
    <property type="method" value="X-ray"/>
    <property type="resolution" value="2.20 A"/>
    <property type="chains" value="H/I=1-102"/>
</dbReference>
<dbReference type="PDB" id="2DBL">
    <property type="method" value="X-ray"/>
    <property type="resolution" value="2.90 A"/>
    <property type="chains" value="H=1-100"/>
</dbReference>
<dbReference type="PDB" id="3ZO0">
    <property type="method" value="X-ray"/>
    <property type="resolution" value="1.99 A"/>
    <property type="chains" value="A=114-320"/>
</dbReference>
<dbReference type="PDBsum" id="1AHW"/>
<dbReference type="PDBsum" id="1AI1"/>
<dbReference type="PDBsum" id="1BM3"/>
<dbReference type="PDBsum" id="1CLO"/>
<dbReference type="PDBsum" id="1CT8"/>
<dbReference type="PDBsum" id="1DBA"/>
<dbReference type="PDBsum" id="1DBB"/>
<dbReference type="PDBsum" id="1DBJ"/>
<dbReference type="PDBsum" id="1DBK"/>
<dbReference type="PDBsum" id="1DBM"/>
<dbReference type="PDBsum" id="1EMT"/>
<dbReference type="PDBsum" id="1FBI"/>
<dbReference type="PDBsum" id="1FDL"/>
<dbReference type="PDBsum" id="1FNS"/>
<dbReference type="PDBsum" id="1GPO"/>
<dbReference type="PDBsum" id="1K4D"/>
<dbReference type="PDBsum" id="1KEL"/>
<dbReference type="PDBsum" id="1KEM"/>
<dbReference type="PDBsum" id="1MF2"/>
<dbReference type="PDBsum" id="1MLC"/>
<dbReference type="PDBsum" id="1N5Y"/>
<dbReference type="PDBsum" id="1N6Q"/>
<dbReference type="PDBsum" id="1NTL"/>
<dbReference type="PDBsum" id="1OAK"/>
<dbReference type="PDBsum" id="1OPG"/>
<dbReference type="PDBsum" id="1P2C"/>
<dbReference type="PDBsum" id="1P7K"/>
<dbReference type="PDBsum" id="1R0A"/>
<dbReference type="PDBsum" id="1R3I"/>
<dbReference type="PDBsum" id="1R3J"/>
<dbReference type="PDBsum" id="1R3K"/>
<dbReference type="PDBsum" id="1R3L"/>
<dbReference type="PDBsum" id="1RIH"/>
<dbReference type="PDBsum" id="1SEQ"/>
<dbReference type="PDBsum" id="1YED"/>
<dbReference type="PDBsum" id="2ATY"/>
<dbReference type="PDBsum" id="2B2X"/>
<dbReference type="PDBsum" id="2DBL"/>
<dbReference type="PDBsum" id="3ZO0"/>
<dbReference type="EMDB" id="EMD-0838"/>
<dbReference type="EMDB" id="EMD-17343"/>
<dbReference type="EMDB" id="EMD-19402"/>
<dbReference type="EMDB" id="EMD-20527"/>
<dbReference type="EMDB" id="EMD-22328"/>
<dbReference type="EMDB" id="EMD-22474"/>
<dbReference type="EMDB" id="EMD-23002"/>
<dbReference type="EMDB" id="EMD-23187"/>
<dbReference type="EMDB" id="EMD-23283"/>
<dbReference type="EMDB" id="EMD-23284"/>
<dbReference type="EMDB" id="EMD-23285"/>
<dbReference type="EMDB" id="EMD-23286"/>
<dbReference type="EMDB" id="EMD-23287"/>
<dbReference type="EMDB" id="EMD-23288"/>
<dbReference type="EMDB" id="EMD-23836"/>
<dbReference type="EMDB" id="EMD-25843"/>
<dbReference type="EMDB" id="EMD-25844"/>
<dbReference type="EMDB" id="EMD-25845"/>
<dbReference type="EMDB" id="EMD-25849"/>
<dbReference type="EMDB" id="EMD-25850"/>
<dbReference type="EMDB" id="EMD-25851"/>
<dbReference type="EMDB" id="EMD-25852"/>
<dbReference type="EMDB" id="EMD-25883"/>
<dbReference type="EMDB" id="EMD-25884"/>
<dbReference type="EMDB" id="EMD-25886"/>
<dbReference type="EMDB" id="EMD-25892"/>
<dbReference type="EMDB" id="EMD-26606"/>
<dbReference type="EMDB" id="EMD-26983"/>
<dbReference type="EMDB" id="EMD-27825"/>
<dbReference type="EMDB" id="EMD-28580"/>
<dbReference type="EMDB" id="EMD-29880"/>
<dbReference type="EMDB" id="EMD-29881"/>
<dbReference type="EMDB" id="EMD-29882"/>
<dbReference type="EMDB" id="EMD-30304"/>
<dbReference type="EMDB" id="EMD-30408"/>
<dbReference type="EMDB" id="EMD-30635"/>
<dbReference type="EMDB" id="EMD-30641"/>
<dbReference type="EMDB" id="EMD-30642"/>
<dbReference type="EMDB" id="EMD-30649"/>
<dbReference type="EMDB" id="EMD-30702"/>
<dbReference type="EMDB" id="EMD-30703"/>
<dbReference type="EMDB" id="EMD-30704"/>
<dbReference type="EMDB" id="EMD-30705"/>
<dbReference type="EMDB" id="EMD-30783"/>
<dbReference type="EMDB" id="EMD-31526"/>
<dbReference type="EMDB" id="EMD-31977"/>
<dbReference type="EMDB" id="EMD-31978"/>
<dbReference type="EMDB" id="EMD-32428"/>
<dbReference type="EMDB" id="EMD-32430"/>
<dbReference type="EMDB" id="EMD-32431"/>
<dbReference type="EMDB" id="EMD-32433"/>
<dbReference type="EMDB" id="EMD-32434"/>
<dbReference type="EMDB" id="EMD-32435"/>
<dbReference type="EMDB" id="EMD-32437"/>
<dbReference type="EMDB" id="EMD-32562"/>
<dbReference type="EMDB" id="EMD-32563"/>
<dbReference type="EMDB" id="EMD-32564"/>
<dbReference type="EMDB" id="EMD-33409"/>
<dbReference type="EMDB" id="EMD-33410"/>
<dbReference type="EMDB" id="EMD-35369"/>
<dbReference type="EMDB" id="EMD-36048"/>
<dbReference type="EMDB" id="EMD-36049"/>
<dbReference type="EMDB" id="EMD-36050"/>
<dbReference type="EMDB" id="EMD-36051"/>
<dbReference type="EMDB" id="EMD-36052"/>
<dbReference type="EMDB" id="EMD-36053"/>
<dbReference type="EMDB" id="EMD-36055"/>
<dbReference type="EMDB" id="EMD-36983"/>
<dbReference type="EMDB" id="EMD-36988"/>
<dbReference type="EMDB" id="EMD-36991"/>
<dbReference type="EMDB" id="EMD-37132"/>
<dbReference type="EMDB" id="EMD-37135"/>
<dbReference type="EMDB" id="EMD-37137"/>
<dbReference type="EMDB" id="EMD-37477"/>
<dbReference type="EMDB" id="EMD-3754"/>
<dbReference type="EMDB" id="EMD-38016"/>
<dbReference type="EMDB" id="EMD-38240"/>
<dbReference type="EMDB" id="EMD-40346"/>
<dbReference type="EMDB" id="EMD-41705"/>
<dbReference type="EMDB" id="EMD-42185"/>
<dbReference type="EMDB" id="EMD-45810"/>
<dbReference type="EMDB" id="EMD-45811"/>
<dbReference type="EMDB" id="EMD-45814"/>
<dbReference type="EMDB" id="EMD-45919"/>
<dbReference type="EMDB" id="EMD-45921"/>
<dbReference type="EMDB" id="EMD-4620"/>
<dbReference type="EMDB" id="EMD-4631"/>
<dbReference type="EMDB" id="EMD-4632"/>
<dbReference type="EMDB" id="EMD-50034"/>
<dbReference type="EMDB" id="EMD-50035"/>
<dbReference type="EMDB" id="EMD-61213"/>
<dbReference type="EMDB" id="EMD-61214"/>
<dbReference type="EMDB" id="EMD-6688"/>
<dbReference type="EMDB" id="EMD-7011"/>
<dbReference type="EMDB" id="EMD-7012"/>
<dbReference type="EMDB" id="EMD-7013"/>
<dbReference type="EMDB" id="EMD-8783"/>
<dbReference type="EMDB" id="EMD-8784"/>
<dbReference type="EMDB" id="EMD-8785"/>
<dbReference type="EMDB" id="EMD-8786"/>
<dbReference type="EMDB" id="EMD-8787"/>
<dbReference type="EMDB" id="EMD-8788"/>
<dbReference type="EMDB" id="EMD-8789"/>
<dbReference type="EMDB" id="EMD-8790"/>
<dbReference type="EMDB" id="EMD-8791"/>
<dbReference type="EMDB" id="EMD-9387"/>
<dbReference type="EMDB" id="EMD-9388"/>
<dbReference type="EMDB" id="EMD-9389"/>
<dbReference type="EMDB" id="EMD-9827"/>
<dbReference type="EMDB" id="EMD-9828"/>
<dbReference type="EMDB" id="EMD-9829"/>
<dbReference type="EMDB" id="EMD-9849"/>
<dbReference type="EMDB" id="EMD-9850"/>
<dbReference type="SMR" id="P01868"/>
<dbReference type="IntAct" id="P01868">
    <property type="interactions" value="3"/>
</dbReference>
<dbReference type="MINT" id="P01868"/>
<dbReference type="GlyConnect" id="248">
    <property type="glycosylation" value="4 N-Linked glycans (1 site)"/>
</dbReference>
<dbReference type="GlyCosmos" id="P01868">
    <property type="glycosylation" value="1 site, 7 glycans"/>
</dbReference>
<dbReference type="SwissPalm" id="P01868"/>
<dbReference type="jPOST" id="P01868"/>
<dbReference type="PeptideAtlas" id="P01868"/>
<dbReference type="ProteomicsDB" id="269541">
    <molecule id="P01868-1"/>
</dbReference>
<dbReference type="ABCD" id="P01868">
    <property type="antibodies" value="18 sequenced antibodies"/>
</dbReference>
<dbReference type="MGI" id="MGI:96446">
    <property type="gene designation" value="Ighg1"/>
</dbReference>
<dbReference type="ChiTaRS" id="Ighg1">
    <property type="organism name" value="mouse"/>
</dbReference>
<dbReference type="EvolutionaryTrace" id="P01868"/>
<dbReference type="Proteomes" id="UP000000589">
    <property type="component" value="Unplaced"/>
</dbReference>
<dbReference type="GO" id="GO:0005737">
    <property type="term" value="C:cytoplasm"/>
    <property type="evidence" value="ECO:0000314"/>
    <property type="project" value="MGI"/>
</dbReference>
<dbReference type="GO" id="GO:0009897">
    <property type="term" value="C:external side of plasma membrane"/>
    <property type="evidence" value="ECO:0000314"/>
    <property type="project" value="MGI"/>
</dbReference>
<dbReference type="GO" id="GO:0005615">
    <property type="term" value="C:extracellular space"/>
    <property type="evidence" value="ECO:0000314"/>
    <property type="project" value="MGI"/>
</dbReference>
<dbReference type="GO" id="GO:0042571">
    <property type="term" value="C:immunoglobulin complex, circulating"/>
    <property type="evidence" value="ECO:0000314"/>
    <property type="project" value="MGI"/>
</dbReference>
<dbReference type="GO" id="GO:0003823">
    <property type="term" value="F:antigen binding"/>
    <property type="evidence" value="ECO:0000314"/>
    <property type="project" value="MGI"/>
</dbReference>
<dbReference type="GO" id="GO:0019731">
    <property type="term" value="P:antibacterial humoral response"/>
    <property type="evidence" value="ECO:0000314"/>
    <property type="project" value="MGI"/>
</dbReference>
<dbReference type="GO" id="GO:0001788">
    <property type="term" value="P:antibody-dependent cellular cytotoxicity"/>
    <property type="evidence" value="ECO:0000314"/>
    <property type="project" value="MGI"/>
</dbReference>
<dbReference type="GO" id="GO:0030183">
    <property type="term" value="P:B cell differentiation"/>
    <property type="evidence" value="ECO:0000315"/>
    <property type="project" value="MGI"/>
</dbReference>
<dbReference type="GO" id="GO:0006958">
    <property type="term" value="P:complement activation, classical pathway"/>
    <property type="evidence" value="ECO:0000314"/>
    <property type="project" value="MGI"/>
</dbReference>
<dbReference type="GO" id="GO:0042742">
    <property type="term" value="P:defense response to bacterium"/>
    <property type="evidence" value="ECO:0000314"/>
    <property type="project" value="MGI"/>
</dbReference>
<dbReference type="GO" id="GO:0002455">
    <property type="term" value="P:humoral immune response mediated by circulating immunoglobulin"/>
    <property type="evidence" value="ECO:0000314"/>
    <property type="project" value="MGI"/>
</dbReference>
<dbReference type="GO" id="GO:0016064">
    <property type="term" value="P:immunoglobulin mediated immune response"/>
    <property type="evidence" value="ECO:0000314"/>
    <property type="project" value="MGI"/>
</dbReference>
<dbReference type="GO" id="GO:0006911">
    <property type="term" value="P:phagocytosis, engulfment"/>
    <property type="evidence" value="ECO:0000314"/>
    <property type="project" value="MGI"/>
</dbReference>
<dbReference type="GO" id="GO:0006910">
    <property type="term" value="P:phagocytosis, recognition"/>
    <property type="evidence" value="ECO:0000314"/>
    <property type="project" value="MGI"/>
</dbReference>
<dbReference type="GO" id="GO:0050778">
    <property type="term" value="P:positive regulation of immune response"/>
    <property type="evidence" value="ECO:0000314"/>
    <property type="project" value="MGI"/>
</dbReference>
<dbReference type="GO" id="GO:0050766">
    <property type="term" value="P:positive regulation of phagocytosis"/>
    <property type="evidence" value="ECO:0000314"/>
    <property type="project" value="MGI"/>
</dbReference>
<dbReference type="GO" id="GO:0001812">
    <property type="term" value="P:positive regulation of type I hypersensitivity"/>
    <property type="evidence" value="ECO:0000314"/>
    <property type="project" value="MGI"/>
</dbReference>
<dbReference type="GO" id="GO:0001798">
    <property type="term" value="P:positive regulation of type IIa hypersensitivity"/>
    <property type="evidence" value="ECO:0000314"/>
    <property type="project" value="MGI"/>
</dbReference>
<dbReference type="CDD" id="cd21817">
    <property type="entry name" value="IgC1_CH1_IgEG"/>
    <property type="match status" value="1"/>
</dbReference>
<dbReference type="CDD" id="cd05768">
    <property type="entry name" value="IgC1_CH3_IgAGD_CH4_IgAEM"/>
    <property type="match status" value="1"/>
</dbReference>
<dbReference type="FunFam" id="2.60.40.10:FF:001739">
    <property type="entry name" value="Ig gamma-2A chain C region"/>
    <property type="match status" value="1"/>
</dbReference>
<dbReference type="FunFam" id="2.60.40.10:FF:000463">
    <property type="entry name" value="Immunoglobulin heavy constant gamma 1"/>
    <property type="match status" value="1"/>
</dbReference>
<dbReference type="FunFam" id="2.60.40.10:FF:001129">
    <property type="entry name" value="Immunoglobulin heavy constant gamma 1"/>
    <property type="match status" value="1"/>
</dbReference>
<dbReference type="Gene3D" id="2.60.40.10">
    <property type="entry name" value="Immunoglobulins"/>
    <property type="match status" value="3"/>
</dbReference>
<dbReference type="InterPro" id="IPR007110">
    <property type="entry name" value="Ig-like_dom"/>
</dbReference>
<dbReference type="InterPro" id="IPR036179">
    <property type="entry name" value="Ig-like_dom_sf"/>
</dbReference>
<dbReference type="InterPro" id="IPR013783">
    <property type="entry name" value="Ig-like_fold"/>
</dbReference>
<dbReference type="InterPro" id="IPR003597">
    <property type="entry name" value="Ig_C1-set"/>
</dbReference>
<dbReference type="InterPro" id="IPR050380">
    <property type="entry name" value="Immune_Resp_Modulators"/>
</dbReference>
<dbReference type="PANTHER" id="PTHR23411">
    <property type="entry name" value="TAPASIN"/>
    <property type="match status" value="1"/>
</dbReference>
<dbReference type="Pfam" id="PF07654">
    <property type="entry name" value="C1-set"/>
    <property type="match status" value="3"/>
</dbReference>
<dbReference type="SMART" id="SM00407">
    <property type="entry name" value="IGc1"/>
    <property type="match status" value="2"/>
</dbReference>
<dbReference type="SUPFAM" id="SSF48726">
    <property type="entry name" value="Immunoglobulin"/>
    <property type="match status" value="3"/>
</dbReference>
<dbReference type="PROSITE" id="PS50835">
    <property type="entry name" value="IG_LIKE"/>
    <property type="match status" value="3"/>
</dbReference>
<proteinExistence type="evidence at protein level"/>
<keyword id="KW-0002">3D-structure</keyword>
<keyword id="KW-0025">Alternative splicing</keyword>
<keyword id="KW-0903">Direct protein sequencing</keyword>
<keyword id="KW-1015">Disulfide bond</keyword>
<keyword id="KW-0325">Glycoprotein</keyword>
<keyword id="KW-0393">Immunoglobulin domain</keyword>
<keyword id="KW-1185">Reference proteome</keyword>
<keyword id="KW-0964">Secreted</keyword>